<dbReference type="PIR" id="A02670">
    <property type="entry name" value="IRTR1A"/>
</dbReference>
<dbReference type="SMR" id="P02328"/>
<dbReference type="Proteomes" id="UP000694395">
    <property type="component" value="Unplaced"/>
</dbReference>
<dbReference type="GO" id="GO:0000786">
    <property type="term" value="C:nucleosome"/>
    <property type="evidence" value="ECO:0007669"/>
    <property type="project" value="UniProtKB-KW"/>
</dbReference>
<dbReference type="GO" id="GO:0005634">
    <property type="term" value="C:nucleus"/>
    <property type="evidence" value="ECO:0007669"/>
    <property type="project" value="UniProtKB-SubCell"/>
</dbReference>
<dbReference type="GO" id="GO:0003677">
    <property type="term" value="F:DNA binding"/>
    <property type="evidence" value="ECO:0007669"/>
    <property type="project" value="UniProtKB-KW"/>
</dbReference>
<dbReference type="GO" id="GO:0030154">
    <property type="term" value="P:cell differentiation"/>
    <property type="evidence" value="ECO:0007669"/>
    <property type="project" value="UniProtKB-KW"/>
</dbReference>
<dbReference type="GO" id="GO:0030261">
    <property type="term" value="P:chromosome condensation"/>
    <property type="evidence" value="ECO:0007669"/>
    <property type="project" value="UniProtKB-KW"/>
</dbReference>
<dbReference type="GO" id="GO:0007283">
    <property type="term" value="P:spermatogenesis"/>
    <property type="evidence" value="ECO:0007669"/>
    <property type="project" value="UniProtKB-KW"/>
</dbReference>
<keyword id="KW-0158">Chromosome</keyword>
<keyword id="KW-0217">Developmental protein</keyword>
<keyword id="KW-0221">Differentiation</keyword>
<keyword id="KW-0903">Direct protein sequencing</keyword>
<keyword id="KW-0226">DNA condensation</keyword>
<keyword id="KW-0238">DNA-binding</keyword>
<keyword id="KW-0544">Nucleosome core</keyword>
<keyword id="KW-0539">Nucleus</keyword>
<keyword id="KW-0744">Spermatogenesis</keyword>
<name>PRTIA_ONCMY</name>
<sequence>PRRRRSSSRPVRRRRRPRRVSRRRRRRGGRRRR</sequence>
<protein>
    <recommendedName>
        <fullName>Protamine-1A</fullName>
    </recommendedName>
    <alternativeName>
        <fullName>Iridine IA</fullName>
    </alternativeName>
</protein>
<reference key="1">
    <citation type="journal article" date="1969" name="Int. J. Protein Res.">
        <title>A new method for fractionation of protamines and the amino acid sequences of salmine and three components of iridine.</title>
        <authorList>
            <person name="Ando T."/>
            <person name="Watanabe S."/>
        </authorList>
    </citation>
    <scope>PROTEIN SEQUENCE</scope>
</reference>
<feature type="peptide" id="PRO_0000044845" description="Protamine-1A">
    <location>
        <begin position="1"/>
        <end position="33"/>
    </location>
</feature>
<feature type="region of interest" description="Disordered" evidence="1">
    <location>
        <begin position="1"/>
        <end position="33"/>
    </location>
</feature>
<proteinExistence type="evidence at protein level"/>
<comment type="function">
    <text>Protamines substitute for histones in the chromatin of sperm during the haploid phase of spermatogenesis. They compact sperm DNA into a highly condensed, stable and inactive complex.</text>
</comment>
<comment type="subcellular location">
    <subcellularLocation>
        <location>Nucleus</location>
    </subcellularLocation>
    <subcellularLocation>
        <location>Chromosome</location>
    </subcellularLocation>
</comment>
<comment type="tissue specificity">
    <text>Testis.</text>
</comment>
<organism>
    <name type="scientific">Oncorhynchus mykiss</name>
    <name type="common">Rainbow trout</name>
    <name type="synonym">Salmo gairdneri</name>
    <dbReference type="NCBI Taxonomy" id="8022"/>
    <lineage>
        <taxon>Eukaryota</taxon>
        <taxon>Metazoa</taxon>
        <taxon>Chordata</taxon>
        <taxon>Craniata</taxon>
        <taxon>Vertebrata</taxon>
        <taxon>Euteleostomi</taxon>
        <taxon>Actinopterygii</taxon>
        <taxon>Neopterygii</taxon>
        <taxon>Teleostei</taxon>
        <taxon>Protacanthopterygii</taxon>
        <taxon>Salmoniformes</taxon>
        <taxon>Salmonidae</taxon>
        <taxon>Salmoninae</taxon>
        <taxon>Oncorhynchus</taxon>
    </lineage>
</organism>
<evidence type="ECO:0000256" key="1">
    <source>
        <dbReference type="SAM" id="MobiDB-lite"/>
    </source>
</evidence>
<accession>P02328</accession>